<keyword id="KW-0010">Activator</keyword>
<keyword id="KW-0539">Nucleus</keyword>
<keyword id="KW-1185">Reference proteome</keyword>
<keyword id="KW-0804">Transcription</keyword>
<keyword id="KW-0805">Transcription regulation</keyword>
<name>GRF5_ORYSJ</name>
<accession>Q6AWY4</accession>
<accession>Q70LH4</accession>
<dbReference type="EMBL" id="AP002837">
    <property type="protein sequence ID" value="BAD67915.1"/>
    <property type="molecule type" value="Genomic_DNA"/>
</dbReference>
<dbReference type="EMBL" id="AP008212">
    <property type="protein sequence ID" value="BAF18532.1"/>
    <property type="molecule type" value="Genomic_DNA"/>
</dbReference>
<dbReference type="EMBL" id="AP014962">
    <property type="status" value="NOT_ANNOTATED_CDS"/>
    <property type="molecule type" value="Genomic_DNA"/>
</dbReference>
<dbReference type="EMBL" id="AK103508">
    <property type="protein sequence ID" value="BAG96119.1"/>
    <property type="molecule type" value="mRNA"/>
</dbReference>
<dbReference type="EMBL" id="AJ566409">
    <property type="protein sequence ID" value="CAD97479.1"/>
    <property type="status" value="ALT_TERM"/>
    <property type="molecule type" value="mRNA"/>
</dbReference>
<dbReference type="EMBL" id="BK004860">
    <property type="protein sequence ID" value="DAA05209.1"/>
    <property type="molecule type" value="Genomic_DNA"/>
</dbReference>
<dbReference type="RefSeq" id="XP_015641605.1">
    <property type="nucleotide sequence ID" value="XM_015786119.1"/>
</dbReference>
<dbReference type="PaxDb" id="39947-Q6AWY4"/>
<dbReference type="EnsemblPlants" id="Os06t0116200-01">
    <property type="protein sequence ID" value="Os06t0116200-01"/>
    <property type="gene ID" value="Os06g0116200"/>
</dbReference>
<dbReference type="Gramene" id="Os06t0116200-01">
    <property type="protein sequence ID" value="Os06t0116200-01"/>
    <property type="gene ID" value="Os06g0116200"/>
</dbReference>
<dbReference type="KEGG" id="dosa:Os06g0116200"/>
<dbReference type="InParanoid" id="Q6AWY4"/>
<dbReference type="OrthoDB" id="1927209at2759"/>
<dbReference type="Proteomes" id="UP000000763">
    <property type="component" value="Chromosome 6"/>
</dbReference>
<dbReference type="Proteomes" id="UP000059680">
    <property type="component" value="Chromosome 6"/>
</dbReference>
<dbReference type="GO" id="GO:0005634">
    <property type="term" value="C:nucleus"/>
    <property type="evidence" value="ECO:0007669"/>
    <property type="project" value="UniProtKB-SubCell"/>
</dbReference>
<dbReference type="GO" id="GO:0005524">
    <property type="term" value="F:ATP binding"/>
    <property type="evidence" value="ECO:0007669"/>
    <property type="project" value="InterPro"/>
</dbReference>
<dbReference type="GO" id="GO:0032502">
    <property type="term" value="P:developmental process"/>
    <property type="evidence" value="ECO:0007669"/>
    <property type="project" value="InterPro"/>
</dbReference>
<dbReference type="GO" id="GO:0006351">
    <property type="term" value="P:DNA-templated transcription"/>
    <property type="evidence" value="ECO:0007669"/>
    <property type="project" value="InterPro"/>
</dbReference>
<dbReference type="GO" id="GO:0006355">
    <property type="term" value="P:regulation of DNA-templated transcription"/>
    <property type="evidence" value="ECO:0007669"/>
    <property type="project" value="InterPro"/>
</dbReference>
<dbReference type="InterPro" id="IPR014978">
    <property type="entry name" value="Gln-Leu-Gln_QLQ"/>
</dbReference>
<dbReference type="InterPro" id="IPR031137">
    <property type="entry name" value="GRF"/>
</dbReference>
<dbReference type="InterPro" id="IPR014977">
    <property type="entry name" value="WRC_dom"/>
</dbReference>
<dbReference type="PANTHER" id="PTHR31602">
    <property type="entry name" value="GROWTH-REGULATING FACTOR 5"/>
    <property type="match status" value="1"/>
</dbReference>
<dbReference type="PANTHER" id="PTHR31602:SF8">
    <property type="entry name" value="GROWTH-REGULATING FACTOR 5"/>
    <property type="match status" value="1"/>
</dbReference>
<dbReference type="Pfam" id="PF08880">
    <property type="entry name" value="QLQ"/>
    <property type="match status" value="1"/>
</dbReference>
<dbReference type="Pfam" id="PF08879">
    <property type="entry name" value="WRC"/>
    <property type="match status" value="1"/>
</dbReference>
<dbReference type="SMART" id="SM00951">
    <property type="entry name" value="QLQ"/>
    <property type="match status" value="1"/>
</dbReference>
<dbReference type="PROSITE" id="PS51666">
    <property type="entry name" value="QLQ"/>
    <property type="match status" value="1"/>
</dbReference>
<dbReference type="PROSITE" id="PS51667">
    <property type="entry name" value="WRC"/>
    <property type="match status" value="1"/>
</dbReference>
<gene>
    <name type="primary">GRF5</name>
    <name type="ordered locus">Os06g0116200</name>
    <name type="ordered locus">LOC_Os06g02560</name>
    <name type="ORF">OSJNBa0019F11.24</name>
</gene>
<evidence type="ECO:0000250" key="1"/>
<evidence type="ECO:0000255" key="2">
    <source>
        <dbReference type="PROSITE-ProRule" id="PRU01001"/>
    </source>
</evidence>
<evidence type="ECO:0000255" key="3">
    <source>
        <dbReference type="PROSITE-ProRule" id="PRU01002"/>
    </source>
</evidence>
<evidence type="ECO:0000256" key="4">
    <source>
        <dbReference type="SAM" id="MobiDB-lite"/>
    </source>
</evidence>
<evidence type="ECO:0000305" key="5"/>
<comment type="function">
    <text evidence="1">Transcription activator that plays a regulatory role in gibberellin-induced stem elongation.</text>
</comment>
<comment type="subcellular location">
    <subcellularLocation>
        <location evidence="3">Nucleus</location>
    </subcellularLocation>
</comment>
<comment type="domain">
    <text>The QLQ domain and WRC domain may be involved in protein-protein interaction and DNA-binding, respectively.</text>
</comment>
<comment type="similarity">
    <text evidence="5">Belongs to the GRF family.</text>
</comment>
<comment type="sequence caution" evidence="5">
    <conflict type="erroneous termination">
        <sequence resource="EMBL-CDS" id="CAD97479"/>
    </conflict>
    <text>Extended C-terminus.</text>
</comment>
<organism>
    <name type="scientific">Oryza sativa subsp. japonica</name>
    <name type="common">Rice</name>
    <dbReference type="NCBI Taxonomy" id="39947"/>
    <lineage>
        <taxon>Eukaryota</taxon>
        <taxon>Viridiplantae</taxon>
        <taxon>Streptophyta</taxon>
        <taxon>Embryophyta</taxon>
        <taxon>Tracheophyta</taxon>
        <taxon>Spermatophyta</taxon>
        <taxon>Magnoliopsida</taxon>
        <taxon>Liliopsida</taxon>
        <taxon>Poales</taxon>
        <taxon>Poaceae</taxon>
        <taxon>BOP clade</taxon>
        <taxon>Oryzoideae</taxon>
        <taxon>Oryzeae</taxon>
        <taxon>Oryzinae</taxon>
        <taxon>Oryza</taxon>
        <taxon>Oryza sativa</taxon>
    </lineage>
</organism>
<sequence length="348" mass="37815">MLSSSPSAAAPGIGGYQPQRGAAVFTAAQWAELEQQALIYKYLVAGVPVPGDLLLPIRPHSSAAATYSFANPAAAPFYHHHHHPSLSYYAYYGKKLDPEPWRCRRTDGKKWRCSKEAHPDSKYCERHMHRGRNRSRKPVESKTAAPAPQSQPQLSNVTTATHDTDAPLPSLTVGAKTHGLSLGGAGSSQFHVDAPSYGSKYSLGAKADVGELSFFSGASGNTRGFTIDSPTDSSWHSLPSSVPPYPMSKPRDSGLLPGAYSYSHLEPSQELGQVTIASLSQEQERRSFGGGAGGMLGNVKHENQPLRPFFDEWPGRRDSWSEMDEERSNQTSFSTTQLSISIPMPRCD</sequence>
<feature type="chain" id="PRO_0000419306" description="Growth-regulating factor 5">
    <location>
        <begin position="1"/>
        <end position="348"/>
    </location>
</feature>
<feature type="domain" description="QLQ" evidence="2">
    <location>
        <begin position="24"/>
        <end position="59"/>
    </location>
</feature>
<feature type="domain" description="WRC" evidence="3">
    <location>
        <begin position="97"/>
        <end position="141"/>
    </location>
</feature>
<feature type="region of interest" description="Disordered" evidence="4">
    <location>
        <begin position="125"/>
        <end position="165"/>
    </location>
</feature>
<feature type="region of interest" description="Disordered" evidence="4">
    <location>
        <begin position="306"/>
        <end position="348"/>
    </location>
</feature>
<feature type="short sequence motif" description="Bipartite nuclear localization signal" evidence="3">
    <location>
        <begin position="94"/>
        <end position="112"/>
    </location>
</feature>
<feature type="short sequence motif" description="Bipartite nuclear localization signal" evidence="3">
    <location>
        <begin position="130"/>
        <end position="137"/>
    </location>
</feature>
<feature type="compositionally biased region" description="Basic residues" evidence="4">
    <location>
        <begin position="127"/>
        <end position="136"/>
    </location>
</feature>
<feature type="compositionally biased region" description="Polar residues" evidence="4">
    <location>
        <begin position="148"/>
        <end position="161"/>
    </location>
</feature>
<feature type="compositionally biased region" description="Basic and acidic residues" evidence="4">
    <location>
        <begin position="306"/>
        <end position="320"/>
    </location>
</feature>
<feature type="compositionally biased region" description="Polar residues" evidence="4">
    <location>
        <begin position="329"/>
        <end position="340"/>
    </location>
</feature>
<protein>
    <recommendedName>
        <fullName>Growth-regulating factor 5</fullName>
        <shortName>OsGRF5</shortName>
    </recommendedName>
    <alternativeName>
        <fullName>Transcription activator GRF5</fullName>
    </alternativeName>
</protein>
<reference key="1">
    <citation type="journal article" date="2005" name="Nature">
        <title>The map-based sequence of the rice genome.</title>
        <authorList>
            <consortium name="International rice genome sequencing project (IRGSP)"/>
        </authorList>
    </citation>
    <scope>NUCLEOTIDE SEQUENCE [LARGE SCALE GENOMIC DNA]</scope>
    <source>
        <strain>cv. Nipponbare</strain>
    </source>
</reference>
<reference key="2">
    <citation type="journal article" date="2008" name="Nucleic Acids Res.">
        <title>The rice annotation project database (RAP-DB): 2008 update.</title>
        <authorList>
            <consortium name="The rice annotation project (RAP)"/>
        </authorList>
    </citation>
    <scope>GENOME REANNOTATION</scope>
    <source>
        <strain>cv. Nipponbare</strain>
    </source>
</reference>
<reference key="3">
    <citation type="journal article" date="2013" name="Rice">
        <title>Improvement of the Oryza sativa Nipponbare reference genome using next generation sequence and optical map data.</title>
        <authorList>
            <person name="Kawahara Y."/>
            <person name="de la Bastide M."/>
            <person name="Hamilton J.P."/>
            <person name="Kanamori H."/>
            <person name="McCombie W.R."/>
            <person name="Ouyang S."/>
            <person name="Schwartz D.C."/>
            <person name="Tanaka T."/>
            <person name="Wu J."/>
            <person name="Zhou S."/>
            <person name="Childs K.L."/>
            <person name="Davidson R.M."/>
            <person name="Lin H."/>
            <person name="Quesada-Ocampo L."/>
            <person name="Vaillancourt B."/>
            <person name="Sakai H."/>
            <person name="Lee S.S."/>
            <person name="Kim J."/>
            <person name="Numa H."/>
            <person name="Itoh T."/>
            <person name="Buell C.R."/>
            <person name="Matsumoto T."/>
        </authorList>
    </citation>
    <scope>GENOME REANNOTATION</scope>
    <source>
        <strain>cv. Nipponbare</strain>
    </source>
</reference>
<reference key="4">
    <citation type="journal article" date="2003" name="Science">
        <title>Collection, mapping, and annotation of over 28,000 cDNA clones from japonica rice.</title>
        <authorList>
            <consortium name="The rice full-length cDNA consortium"/>
        </authorList>
    </citation>
    <scope>NUCLEOTIDE SEQUENCE [LARGE SCALE MRNA]</scope>
    <source>
        <strain>cv. Nipponbare</strain>
    </source>
</reference>
<reference key="5">
    <citation type="journal article" date="2004" name="Plant J.">
        <title>Development of an efficient method for the isolation of factors involved in gene transcription during rice embryo development.</title>
        <authorList>
            <person name="Ye R."/>
            <person name="Yao Q.-H."/>
            <person name="Xu Z.-H."/>
            <person name="Xue H.-W."/>
        </authorList>
    </citation>
    <scope>NUCLEOTIDE SEQUENCE [MRNA] OF 152-348</scope>
    <source>
        <strain>cv. Nipponbare</strain>
        <tissue>Embryo</tissue>
    </source>
</reference>
<reference key="6">
    <citation type="journal article" date="2004" name="Plant Cell Physiol.">
        <title>Whole genome analysis of the OsGRF gene family encoding plant-specific putative transcription activators in rice (Oryza sativa L.).</title>
        <authorList>
            <person name="Choi D."/>
            <person name="Kim J.H."/>
            <person name="Kende H."/>
        </authorList>
    </citation>
    <scope>IDENTIFICATION</scope>
    <scope>GENE FAMILY</scope>
    <source>
        <strain>cv. Nipponbare</strain>
    </source>
</reference>
<proteinExistence type="evidence at transcript level"/>